<organism>
    <name type="scientific">Listeria monocytogenes serotype 4b (strain CLIP80459)</name>
    <dbReference type="NCBI Taxonomy" id="568819"/>
    <lineage>
        <taxon>Bacteria</taxon>
        <taxon>Bacillati</taxon>
        <taxon>Bacillota</taxon>
        <taxon>Bacilli</taxon>
        <taxon>Bacillales</taxon>
        <taxon>Listeriaceae</taxon>
        <taxon>Listeria</taxon>
    </lineage>
</organism>
<name>SYS_LISMC</name>
<comment type="function">
    <text evidence="1">Catalyzes the attachment of serine to tRNA(Ser). Is also able to aminoacylate tRNA(Sec) with serine, to form the misacylated tRNA L-seryl-tRNA(Sec), which will be further converted into selenocysteinyl-tRNA(Sec).</text>
</comment>
<comment type="catalytic activity">
    <reaction evidence="1">
        <text>tRNA(Ser) + L-serine + ATP = L-seryl-tRNA(Ser) + AMP + diphosphate + H(+)</text>
        <dbReference type="Rhea" id="RHEA:12292"/>
        <dbReference type="Rhea" id="RHEA-COMP:9669"/>
        <dbReference type="Rhea" id="RHEA-COMP:9703"/>
        <dbReference type="ChEBI" id="CHEBI:15378"/>
        <dbReference type="ChEBI" id="CHEBI:30616"/>
        <dbReference type="ChEBI" id="CHEBI:33019"/>
        <dbReference type="ChEBI" id="CHEBI:33384"/>
        <dbReference type="ChEBI" id="CHEBI:78442"/>
        <dbReference type="ChEBI" id="CHEBI:78533"/>
        <dbReference type="ChEBI" id="CHEBI:456215"/>
        <dbReference type="EC" id="6.1.1.11"/>
    </reaction>
</comment>
<comment type="catalytic activity">
    <reaction evidence="1">
        <text>tRNA(Sec) + L-serine + ATP = L-seryl-tRNA(Sec) + AMP + diphosphate + H(+)</text>
        <dbReference type="Rhea" id="RHEA:42580"/>
        <dbReference type="Rhea" id="RHEA-COMP:9742"/>
        <dbReference type="Rhea" id="RHEA-COMP:10128"/>
        <dbReference type="ChEBI" id="CHEBI:15378"/>
        <dbReference type="ChEBI" id="CHEBI:30616"/>
        <dbReference type="ChEBI" id="CHEBI:33019"/>
        <dbReference type="ChEBI" id="CHEBI:33384"/>
        <dbReference type="ChEBI" id="CHEBI:78442"/>
        <dbReference type="ChEBI" id="CHEBI:78533"/>
        <dbReference type="ChEBI" id="CHEBI:456215"/>
        <dbReference type="EC" id="6.1.1.11"/>
    </reaction>
</comment>
<comment type="pathway">
    <text evidence="1">Aminoacyl-tRNA biosynthesis; selenocysteinyl-tRNA(Sec) biosynthesis; L-seryl-tRNA(Sec) from L-serine and tRNA(Sec): step 1/1.</text>
</comment>
<comment type="subunit">
    <text evidence="1">Homodimer. The tRNA molecule binds across the dimer.</text>
</comment>
<comment type="subcellular location">
    <subcellularLocation>
        <location evidence="1">Cytoplasm</location>
    </subcellularLocation>
</comment>
<comment type="domain">
    <text evidence="1">Consists of two distinct domains, a catalytic core and a N-terminal extension that is involved in tRNA binding.</text>
</comment>
<comment type="similarity">
    <text evidence="1">Belongs to the class-II aminoacyl-tRNA synthetase family. Type-1 seryl-tRNA synthetase subfamily.</text>
</comment>
<dbReference type="EC" id="6.1.1.11" evidence="1"/>
<dbReference type="EMBL" id="FM242711">
    <property type="protein sequence ID" value="CAS06475.1"/>
    <property type="molecule type" value="Genomic_DNA"/>
</dbReference>
<dbReference type="RefSeq" id="WP_003725040.1">
    <property type="nucleotide sequence ID" value="NC_012488.1"/>
</dbReference>
<dbReference type="SMR" id="C1L082"/>
<dbReference type="KEGG" id="lmc:Lm4b_02721"/>
<dbReference type="HOGENOM" id="CLU_023797_1_1_9"/>
<dbReference type="UniPathway" id="UPA00906">
    <property type="reaction ID" value="UER00895"/>
</dbReference>
<dbReference type="GO" id="GO:0005737">
    <property type="term" value="C:cytoplasm"/>
    <property type="evidence" value="ECO:0007669"/>
    <property type="project" value="UniProtKB-SubCell"/>
</dbReference>
<dbReference type="GO" id="GO:0005524">
    <property type="term" value="F:ATP binding"/>
    <property type="evidence" value="ECO:0007669"/>
    <property type="project" value="UniProtKB-UniRule"/>
</dbReference>
<dbReference type="GO" id="GO:0140096">
    <property type="term" value="F:catalytic activity, acting on a protein"/>
    <property type="evidence" value="ECO:0007669"/>
    <property type="project" value="UniProtKB-ARBA"/>
</dbReference>
<dbReference type="GO" id="GO:0004828">
    <property type="term" value="F:serine-tRNA ligase activity"/>
    <property type="evidence" value="ECO:0007669"/>
    <property type="project" value="UniProtKB-UniRule"/>
</dbReference>
<dbReference type="GO" id="GO:0016740">
    <property type="term" value="F:transferase activity"/>
    <property type="evidence" value="ECO:0007669"/>
    <property type="project" value="UniProtKB-ARBA"/>
</dbReference>
<dbReference type="GO" id="GO:0016260">
    <property type="term" value="P:selenocysteine biosynthetic process"/>
    <property type="evidence" value="ECO:0007669"/>
    <property type="project" value="UniProtKB-UniRule"/>
</dbReference>
<dbReference type="GO" id="GO:0006434">
    <property type="term" value="P:seryl-tRNA aminoacylation"/>
    <property type="evidence" value="ECO:0007669"/>
    <property type="project" value="UniProtKB-UniRule"/>
</dbReference>
<dbReference type="CDD" id="cd00770">
    <property type="entry name" value="SerRS_core"/>
    <property type="match status" value="1"/>
</dbReference>
<dbReference type="Gene3D" id="3.30.930.10">
    <property type="entry name" value="Bira Bifunctional Protein, Domain 2"/>
    <property type="match status" value="1"/>
</dbReference>
<dbReference type="Gene3D" id="1.10.287.40">
    <property type="entry name" value="Serine-tRNA synthetase, tRNA binding domain"/>
    <property type="match status" value="1"/>
</dbReference>
<dbReference type="HAMAP" id="MF_00176">
    <property type="entry name" value="Ser_tRNA_synth_type1"/>
    <property type="match status" value="1"/>
</dbReference>
<dbReference type="InterPro" id="IPR002314">
    <property type="entry name" value="aa-tRNA-synt_IIb"/>
</dbReference>
<dbReference type="InterPro" id="IPR006195">
    <property type="entry name" value="aa-tRNA-synth_II"/>
</dbReference>
<dbReference type="InterPro" id="IPR045864">
    <property type="entry name" value="aa-tRNA-synth_II/BPL/LPL"/>
</dbReference>
<dbReference type="InterPro" id="IPR002317">
    <property type="entry name" value="Ser-tRNA-ligase_type_1"/>
</dbReference>
<dbReference type="InterPro" id="IPR015866">
    <property type="entry name" value="Ser-tRNA-synth_1_N"/>
</dbReference>
<dbReference type="InterPro" id="IPR042103">
    <property type="entry name" value="SerRS_1_N_sf"/>
</dbReference>
<dbReference type="InterPro" id="IPR033729">
    <property type="entry name" value="SerRS_core"/>
</dbReference>
<dbReference type="InterPro" id="IPR010978">
    <property type="entry name" value="tRNA-bd_arm"/>
</dbReference>
<dbReference type="NCBIfam" id="TIGR00414">
    <property type="entry name" value="serS"/>
    <property type="match status" value="1"/>
</dbReference>
<dbReference type="PANTHER" id="PTHR43697:SF1">
    <property type="entry name" value="SERINE--TRNA LIGASE"/>
    <property type="match status" value="1"/>
</dbReference>
<dbReference type="PANTHER" id="PTHR43697">
    <property type="entry name" value="SERYL-TRNA SYNTHETASE"/>
    <property type="match status" value="1"/>
</dbReference>
<dbReference type="Pfam" id="PF02403">
    <property type="entry name" value="Seryl_tRNA_N"/>
    <property type="match status" value="1"/>
</dbReference>
<dbReference type="Pfam" id="PF00587">
    <property type="entry name" value="tRNA-synt_2b"/>
    <property type="match status" value="1"/>
</dbReference>
<dbReference type="PIRSF" id="PIRSF001529">
    <property type="entry name" value="Ser-tRNA-synth_IIa"/>
    <property type="match status" value="1"/>
</dbReference>
<dbReference type="PRINTS" id="PR00981">
    <property type="entry name" value="TRNASYNTHSER"/>
</dbReference>
<dbReference type="SUPFAM" id="SSF55681">
    <property type="entry name" value="Class II aaRS and biotin synthetases"/>
    <property type="match status" value="1"/>
</dbReference>
<dbReference type="SUPFAM" id="SSF46589">
    <property type="entry name" value="tRNA-binding arm"/>
    <property type="match status" value="1"/>
</dbReference>
<dbReference type="PROSITE" id="PS50862">
    <property type="entry name" value="AA_TRNA_LIGASE_II"/>
    <property type="match status" value="1"/>
</dbReference>
<accession>C1L082</accession>
<gene>
    <name evidence="1" type="primary">serS</name>
    <name type="ordered locus">Lm4b_02721</name>
</gene>
<sequence length="427" mass="49108">MLDVKLLRNNFDEVKQKLQNRGEDLGEFEKFGELDKRRRTLIVETEALKSQRNEVSQEIAKLKREKQDADAKIEEMRVVGDRIKTLDIELREIDEKLDMILMSIPNIPHESTPVGESEDDNVEIRKWGEVREFDFEPKAHWDLGTDLDILDFENAAKVTGSRFVFYKKLGARLERALINFMMDLHSNEHGYEEMLPPYMVNRASMTGTGQLPKFEEDAFLIEAEDYFLIPTAEVPVTNYHREDILKAEDLPRKYTAFSACFRSEAGSAGRDTRGLIRQHQFNKVELVQFVKPEDSYAALEKLTGNAEEVLRRLELPYRVLSMCTADLGFTAAKKYDLEVWIPSYNSYREISSCSNFESFQARRANIRFRREPGSKPEYVHTLNGSGLALGRTVAAILENYQDADGSVRIPKVLQGYMGGIEKIELPK</sequence>
<proteinExistence type="inferred from homology"/>
<keyword id="KW-0030">Aminoacyl-tRNA synthetase</keyword>
<keyword id="KW-0067">ATP-binding</keyword>
<keyword id="KW-0963">Cytoplasm</keyword>
<keyword id="KW-0436">Ligase</keyword>
<keyword id="KW-0547">Nucleotide-binding</keyword>
<keyword id="KW-0648">Protein biosynthesis</keyword>
<feature type="chain" id="PRO_1000203762" description="Serine--tRNA ligase">
    <location>
        <begin position="1"/>
        <end position="427"/>
    </location>
</feature>
<feature type="binding site" evidence="1">
    <location>
        <begin position="231"/>
        <end position="233"/>
    </location>
    <ligand>
        <name>L-serine</name>
        <dbReference type="ChEBI" id="CHEBI:33384"/>
    </ligand>
</feature>
<feature type="binding site" evidence="1">
    <location>
        <begin position="262"/>
        <end position="264"/>
    </location>
    <ligand>
        <name>ATP</name>
        <dbReference type="ChEBI" id="CHEBI:30616"/>
    </ligand>
</feature>
<feature type="binding site" evidence="1">
    <location>
        <position position="285"/>
    </location>
    <ligand>
        <name>L-serine</name>
        <dbReference type="ChEBI" id="CHEBI:33384"/>
    </ligand>
</feature>
<feature type="binding site" evidence="1">
    <location>
        <begin position="349"/>
        <end position="352"/>
    </location>
    <ligand>
        <name>ATP</name>
        <dbReference type="ChEBI" id="CHEBI:30616"/>
    </ligand>
</feature>
<feature type="binding site" evidence="1">
    <location>
        <position position="385"/>
    </location>
    <ligand>
        <name>L-serine</name>
        <dbReference type="ChEBI" id="CHEBI:33384"/>
    </ligand>
</feature>
<protein>
    <recommendedName>
        <fullName evidence="1">Serine--tRNA ligase</fullName>
        <ecNumber evidence="1">6.1.1.11</ecNumber>
    </recommendedName>
    <alternativeName>
        <fullName evidence="1">Seryl-tRNA synthetase</fullName>
        <shortName evidence="1">SerRS</shortName>
    </alternativeName>
    <alternativeName>
        <fullName evidence="1">Seryl-tRNA(Ser/Sec) synthetase</fullName>
    </alternativeName>
</protein>
<evidence type="ECO:0000255" key="1">
    <source>
        <dbReference type="HAMAP-Rule" id="MF_00176"/>
    </source>
</evidence>
<reference key="1">
    <citation type="journal article" date="2012" name="BMC Genomics">
        <title>Comparative genomics and transcriptomics of lineages I, II, and III strains of Listeria monocytogenes.</title>
        <authorList>
            <person name="Hain T."/>
            <person name="Ghai R."/>
            <person name="Billion A."/>
            <person name="Kuenne C.T."/>
            <person name="Steinweg C."/>
            <person name="Izar B."/>
            <person name="Mohamed W."/>
            <person name="Mraheil M."/>
            <person name="Domann E."/>
            <person name="Schaffrath S."/>
            <person name="Karst U."/>
            <person name="Goesmann A."/>
            <person name="Oehm S."/>
            <person name="Puhler A."/>
            <person name="Merkl R."/>
            <person name="Vorwerk S."/>
            <person name="Glaser P."/>
            <person name="Garrido P."/>
            <person name="Rusniok C."/>
            <person name="Buchrieser C."/>
            <person name="Goebel W."/>
            <person name="Chakraborty T."/>
        </authorList>
    </citation>
    <scope>NUCLEOTIDE SEQUENCE [LARGE SCALE GENOMIC DNA]</scope>
    <source>
        <strain>CLIP80459</strain>
    </source>
</reference>